<evidence type="ECO:0000250" key="1"/>
<evidence type="ECO:0000305" key="2"/>
<evidence type="ECO:0007829" key="3">
    <source>
        <dbReference type="PDB" id="1ESW"/>
    </source>
</evidence>
<evidence type="ECO:0007829" key="4">
    <source>
        <dbReference type="PDB" id="2OWW"/>
    </source>
</evidence>
<evidence type="ECO:0007829" key="5">
    <source>
        <dbReference type="PDB" id="5JIW"/>
    </source>
</evidence>
<organism>
    <name type="scientific">Thermus thermophilus</name>
    <dbReference type="NCBI Taxonomy" id="274"/>
    <lineage>
        <taxon>Bacteria</taxon>
        <taxon>Thermotogati</taxon>
        <taxon>Deinococcota</taxon>
        <taxon>Deinococci</taxon>
        <taxon>Thermales</taxon>
        <taxon>Thermaceae</taxon>
        <taxon>Thermus</taxon>
    </lineage>
</organism>
<reference key="1">
    <citation type="submission" date="1998-07" db="EMBL/GenBank/DDBJ databases">
        <title>Cloning, expression and characterization of amylomaltase from Thermus aquaticus ATCC33923.</title>
        <authorList>
            <person name="Terada Y."/>
            <person name="Fujii K."/>
            <person name="Takaha T."/>
            <person name="Okada S."/>
        </authorList>
    </citation>
    <scope>NUCLEOTIDE SEQUENCE [GENOMIC DNA]</scope>
    <source>
        <strain>ATCC 33923 / DSM 674 / AT-62</strain>
    </source>
</reference>
<reference key="2">
    <citation type="journal article" date="2000" name="J. Mol. Biol.">
        <title>Crystal structure of amylomaltase from Thermus aquaticus, a glycosyltransferase catalysing the production of large cyclic glucans.</title>
        <authorList>
            <person name="Przylas I."/>
            <person name="Tomoo K."/>
            <person name="Terada Y."/>
            <person name="Takaha T."/>
            <person name="Fujii K."/>
            <person name="Saenger W."/>
            <person name="Strater N."/>
        </authorList>
    </citation>
    <scope>X-RAY CRYSTALLOGRAPHY (2.0 ANGSTROMS)</scope>
</reference>
<gene>
    <name type="primary">malQ</name>
</gene>
<dbReference type="EC" id="2.4.1.25"/>
<dbReference type="EMBL" id="AB016244">
    <property type="protein sequence ID" value="BAA33728.1"/>
    <property type="molecule type" value="Genomic_DNA"/>
</dbReference>
<dbReference type="PDB" id="1CWY">
    <property type="method" value="X-ray"/>
    <property type="resolution" value="2.00 A"/>
    <property type="chains" value="A=1-500"/>
</dbReference>
<dbReference type="PDB" id="1ESW">
    <property type="method" value="X-ray"/>
    <property type="resolution" value="1.90 A"/>
    <property type="chains" value="A=1-500"/>
</dbReference>
<dbReference type="PDB" id="1FP8">
    <property type="method" value="X-ray"/>
    <property type="resolution" value="2.30 A"/>
    <property type="chains" value="A=1-500"/>
</dbReference>
<dbReference type="PDB" id="1FP9">
    <property type="method" value="X-ray"/>
    <property type="resolution" value="3.10 A"/>
    <property type="chains" value="A=1-500"/>
</dbReference>
<dbReference type="PDB" id="2OWC">
    <property type="method" value="X-ray"/>
    <property type="resolution" value="2.05 A"/>
    <property type="chains" value="A=1-500"/>
</dbReference>
<dbReference type="PDB" id="2OWW">
    <property type="method" value="X-ray"/>
    <property type="resolution" value="2.20 A"/>
    <property type="chains" value="A=1-500"/>
</dbReference>
<dbReference type="PDB" id="2OWX">
    <property type="method" value="X-ray"/>
    <property type="resolution" value="2.50 A"/>
    <property type="chains" value="A=1-500"/>
</dbReference>
<dbReference type="PDB" id="5JIW">
    <property type="method" value="X-ray"/>
    <property type="resolution" value="1.73 A"/>
    <property type="chains" value="A=1-500"/>
</dbReference>
<dbReference type="PDBsum" id="1CWY"/>
<dbReference type="PDBsum" id="1ESW"/>
<dbReference type="PDBsum" id="1FP8"/>
<dbReference type="PDBsum" id="1FP9"/>
<dbReference type="PDBsum" id="2OWC"/>
<dbReference type="PDBsum" id="2OWW"/>
<dbReference type="PDBsum" id="2OWX"/>
<dbReference type="PDBsum" id="5JIW"/>
<dbReference type="SMR" id="O87172"/>
<dbReference type="CAZy" id="GH77">
    <property type="family name" value="Glycoside Hydrolase Family 77"/>
</dbReference>
<dbReference type="BRENDA" id="2.4.1.25">
    <property type="organism ID" value="2305"/>
</dbReference>
<dbReference type="EvolutionaryTrace" id="O87172"/>
<dbReference type="GO" id="GO:0005737">
    <property type="term" value="C:cytoplasm"/>
    <property type="evidence" value="ECO:0007669"/>
    <property type="project" value="UniProtKB-SubCell"/>
</dbReference>
<dbReference type="GO" id="GO:0004134">
    <property type="term" value="F:4-alpha-glucanotransferase activity"/>
    <property type="evidence" value="ECO:0007669"/>
    <property type="project" value="UniProtKB-EC"/>
</dbReference>
<dbReference type="GO" id="GO:0005975">
    <property type="term" value="P:carbohydrate metabolic process"/>
    <property type="evidence" value="ECO:0007669"/>
    <property type="project" value="InterPro"/>
</dbReference>
<dbReference type="Gene3D" id="3.20.20.80">
    <property type="entry name" value="Glycosidases"/>
    <property type="match status" value="1"/>
</dbReference>
<dbReference type="InterPro" id="IPR003385">
    <property type="entry name" value="Glyco_hydro_77"/>
</dbReference>
<dbReference type="InterPro" id="IPR017853">
    <property type="entry name" value="Glycoside_hydrolase_SF"/>
</dbReference>
<dbReference type="NCBIfam" id="TIGR00217">
    <property type="entry name" value="malQ"/>
    <property type="match status" value="1"/>
</dbReference>
<dbReference type="NCBIfam" id="NF011080">
    <property type="entry name" value="PRK14508.1-3"/>
    <property type="match status" value="1"/>
</dbReference>
<dbReference type="PANTHER" id="PTHR32438">
    <property type="entry name" value="4-ALPHA-GLUCANOTRANSFERASE DPE1, CHLOROPLASTIC/AMYLOPLASTIC"/>
    <property type="match status" value="1"/>
</dbReference>
<dbReference type="PANTHER" id="PTHR32438:SF5">
    <property type="entry name" value="4-ALPHA-GLUCANOTRANSFERASE DPE1, CHLOROPLASTIC_AMYLOPLASTIC"/>
    <property type="match status" value="1"/>
</dbReference>
<dbReference type="Pfam" id="PF02446">
    <property type="entry name" value="Glyco_hydro_77"/>
    <property type="match status" value="1"/>
</dbReference>
<dbReference type="SUPFAM" id="SSF51445">
    <property type="entry name" value="(Trans)glycosidases"/>
    <property type="match status" value="1"/>
</dbReference>
<accession>O87172</accession>
<keyword id="KW-0002">3D-structure</keyword>
<keyword id="KW-0119">Carbohydrate metabolism</keyword>
<keyword id="KW-0963">Cytoplasm</keyword>
<keyword id="KW-0328">Glycosyltransferase</keyword>
<keyword id="KW-0808">Transferase</keyword>
<proteinExistence type="evidence at protein level"/>
<protein>
    <recommendedName>
        <fullName>4-alpha-glucanotransferase</fullName>
        <ecNumber>2.4.1.25</ecNumber>
    </recommendedName>
    <alternativeName>
        <fullName>Amylomaltase</fullName>
    </alternativeName>
    <alternativeName>
        <fullName>Disproportionating enzyme</fullName>
        <shortName>D-enzyme</shortName>
    </alternativeName>
</protein>
<name>MALQ_THETH</name>
<sequence>MELPRAFGLLLHPTSLPGPYGVGVLGREARDFLRFLKEAGGRYWQVLPLGPTGYGDSPYQSFSAFAGNPYLIDLRPLAERGYVRLEDPGFPQGRVDYGLLYAWKWPALKEAFRGFKEKASPEEREAFAAFREREAWWLEDYALFMALKGAHGGLPWNRWPLPLRKREEKALREAKSALAEEVAFHAFTQWLFFRQWGALKAEAEALGIRIIGDMPIFVAEDSAEVWAHPEWFHLDEEGRPTVVAGVPPDYFSETGQRWGNPLYRWDVLEREGFSFWIRRLEKALELFHLVRIDHFRGFEAYWEIPASCPTAVEGRWVKAPGEKLFQKIQEVFGEVPVLAEDLGVITPEVEALRDRFGLPGMKVLQFAFDDGMENPFLPHNYPAHGRVVVYTGTHDNDTTLGWYRTATPHEKAFMARYLADWGITFREEEEVPWALMHLGMKSVARLAVYPVQDVLALGSEARMNYPGRPSGNWAWRLLPGELSPEHGARLRAMAEATERL</sequence>
<comment type="catalytic activity">
    <reaction>
        <text>Transfers a segment of a (1-&gt;4)-alpha-D-glucan to a new position in an acceptor, which may be glucose or a (1-&gt;4)-alpha-D-glucan.</text>
        <dbReference type="EC" id="2.4.1.25"/>
    </reaction>
</comment>
<comment type="subcellular location">
    <subcellularLocation>
        <location evidence="1">Cytoplasm</location>
    </subcellularLocation>
</comment>
<comment type="similarity">
    <text evidence="2">Belongs to the disproportionating enzyme family.</text>
</comment>
<feature type="chain" id="PRO_0000170132" description="4-alpha-glucanotransferase">
    <location>
        <begin position="1"/>
        <end position="500"/>
    </location>
</feature>
<feature type="strand" evidence="5">
    <location>
        <begin position="5"/>
        <end position="10"/>
    </location>
</feature>
<feature type="helix" evidence="5">
    <location>
        <begin position="13"/>
        <end position="15"/>
    </location>
</feature>
<feature type="strand" evidence="3">
    <location>
        <begin position="19"/>
        <end position="22"/>
    </location>
</feature>
<feature type="helix" evidence="5">
    <location>
        <begin position="27"/>
        <end position="38"/>
    </location>
</feature>
<feature type="strand" evidence="5">
    <location>
        <begin position="43"/>
        <end position="45"/>
    </location>
</feature>
<feature type="strand" evidence="5">
    <location>
        <begin position="60"/>
        <end position="62"/>
    </location>
</feature>
<feature type="helix" evidence="5">
    <location>
        <begin position="69"/>
        <end position="71"/>
    </location>
</feature>
<feature type="helix" evidence="5">
    <location>
        <begin position="75"/>
        <end position="79"/>
    </location>
</feature>
<feature type="strand" evidence="5">
    <location>
        <begin position="92"/>
        <end position="94"/>
    </location>
</feature>
<feature type="helix" evidence="5">
    <location>
        <begin position="97"/>
        <end position="118"/>
    </location>
</feature>
<feature type="helix" evidence="5">
    <location>
        <begin position="121"/>
        <end position="133"/>
    </location>
</feature>
<feature type="helix" evidence="5">
    <location>
        <begin position="135"/>
        <end position="150"/>
    </location>
</feature>
<feature type="turn" evidence="5">
    <location>
        <begin position="151"/>
        <end position="153"/>
    </location>
</feature>
<feature type="helix" evidence="5">
    <location>
        <begin position="156"/>
        <end position="158"/>
    </location>
</feature>
<feature type="helix" evidence="5">
    <location>
        <begin position="161"/>
        <end position="164"/>
    </location>
</feature>
<feature type="helix" evidence="5">
    <location>
        <begin position="168"/>
        <end position="177"/>
    </location>
</feature>
<feature type="helix" evidence="5">
    <location>
        <begin position="179"/>
        <end position="205"/>
    </location>
</feature>
<feature type="strand" evidence="5">
    <location>
        <begin position="209"/>
        <end position="217"/>
    </location>
</feature>
<feature type="strand" evidence="5">
    <location>
        <begin position="220"/>
        <end position="222"/>
    </location>
</feature>
<feature type="helix" evidence="5">
    <location>
        <begin position="223"/>
        <end position="227"/>
    </location>
</feature>
<feature type="helix" evidence="5">
    <location>
        <begin position="229"/>
        <end position="231"/>
    </location>
</feature>
<feature type="strand" evidence="5">
    <location>
        <begin position="240"/>
        <end position="246"/>
    </location>
</feature>
<feature type="helix" evidence="5">
    <location>
        <begin position="249"/>
        <end position="251"/>
    </location>
</feature>
<feature type="strand" evidence="5">
    <location>
        <begin position="256"/>
        <end position="261"/>
    </location>
</feature>
<feature type="helix" evidence="5">
    <location>
        <begin position="265"/>
        <end position="270"/>
    </location>
</feature>
<feature type="turn" evidence="5">
    <location>
        <begin position="271"/>
        <end position="273"/>
    </location>
</feature>
<feature type="helix" evidence="5">
    <location>
        <begin position="274"/>
        <end position="286"/>
    </location>
</feature>
<feature type="strand" evidence="5">
    <location>
        <begin position="288"/>
        <end position="293"/>
    </location>
</feature>
<feature type="helix" evidence="5">
    <location>
        <begin position="295"/>
        <end position="298"/>
    </location>
</feature>
<feature type="strand" evidence="5">
    <location>
        <begin position="300"/>
        <end position="305"/>
    </location>
</feature>
<feature type="strand" evidence="5">
    <location>
        <begin position="309"/>
        <end position="311"/>
    </location>
</feature>
<feature type="strand" evidence="5">
    <location>
        <begin position="315"/>
        <end position="318"/>
    </location>
</feature>
<feature type="helix" evidence="5">
    <location>
        <begin position="321"/>
        <end position="332"/>
    </location>
</feature>
<feature type="strand" evidence="5">
    <location>
        <begin position="337"/>
        <end position="339"/>
    </location>
</feature>
<feature type="helix" evidence="5">
    <location>
        <begin position="347"/>
        <end position="355"/>
    </location>
</feature>
<feature type="strand" evidence="5">
    <location>
        <begin position="360"/>
        <end position="363"/>
    </location>
</feature>
<feature type="helix" evidence="5">
    <location>
        <begin position="364"/>
        <end position="366"/>
    </location>
</feature>
<feature type="strand" evidence="3">
    <location>
        <begin position="367"/>
        <end position="370"/>
    </location>
</feature>
<feature type="helix" evidence="5">
    <location>
        <begin position="378"/>
        <end position="380"/>
    </location>
</feature>
<feature type="strand" evidence="5">
    <location>
        <begin position="387"/>
        <end position="391"/>
    </location>
</feature>
<feature type="helix" evidence="5">
    <location>
        <begin position="399"/>
        <end position="405"/>
    </location>
</feature>
<feature type="helix" evidence="5">
    <location>
        <begin position="408"/>
        <end position="420"/>
    </location>
</feature>
<feature type="helix" evidence="5">
    <location>
        <begin position="428"/>
        <end position="430"/>
    </location>
</feature>
<feature type="helix" evidence="5">
    <location>
        <begin position="431"/>
        <end position="441"/>
    </location>
</feature>
<feature type="strand" evidence="5">
    <location>
        <begin position="445"/>
        <end position="450"/>
    </location>
</feature>
<feature type="helix" evidence="5">
    <location>
        <begin position="451"/>
        <end position="454"/>
    </location>
</feature>
<feature type="helix" evidence="5">
    <location>
        <begin position="459"/>
        <end position="461"/>
    </location>
</feature>
<feature type="strand" evidence="3">
    <location>
        <begin position="469"/>
        <end position="471"/>
    </location>
</feature>
<feature type="turn" evidence="4">
    <location>
        <begin position="479"/>
        <end position="481"/>
    </location>
</feature>
<feature type="helix" evidence="5">
    <location>
        <begin position="484"/>
        <end position="496"/>
    </location>
</feature>